<proteinExistence type="inferred from homology"/>
<dbReference type="EC" id="2.5.1.75" evidence="1"/>
<dbReference type="EMBL" id="CP001097">
    <property type="protein sequence ID" value="ACD90035.1"/>
    <property type="molecule type" value="Genomic_DNA"/>
</dbReference>
<dbReference type="RefSeq" id="WP_012465914.1">
    <property type="nucleotide sequence ID" value="NC_010803.1"/>
</dbReference>
<dbReference type="SMR" id="B3EIU4"/>
<dbReference type="STRING" id="290315.Clim_0959"/>
<dbReference type="KEGG" id="cli:Clim_0959"/>
<dbReference type="eggNOG" id="COG0324">
    <property type="taxonomic scope" value="Bacteria"/>
</dbReference>
<dbReference type="HOGENOM" id="CLU_032616_0_1_10"/>
<dbReference type="OrthoDB" id="9776390at2"/>
<dbReference type="Proteomes" id="UP000008841">
    <property type="component" value="Chromosome"/>
</dbReference>
<dbReference type="GO" id="GO:0005524">
    <property type="term" value="F:ATP binding"/>
    <property type="evidence" value="ECO:0007669"/>
    <property type="project" value="UniProtKB-UniRule"/>
</dbReference>
<dbReference type="GO" id="GO:0052381">
    <property type="term" value="F:tRNA dimethylallyltransferase activity"/>
    <property type="evidence" value="ECO:0007669"/>
    <property type="project" value="UniProtKB-UniRule"/>
</dbReference>
<dbReference type="GO" id="GO:0006400">
    <property type="term" value="P:tRNA modification"/>
    <property type="evidence" value="ECO:0007669"/>
    <property type="project" value="TreeGrafter"/>
</dbReference>
<dbReference type="Gene3D" id="1.10.20.140">
    <property type="match status" value="1"/>
</dbReference>
<dbReference type="Gene3D" id="3.40.50.300">
    <property type="entry name" value="P-loop containing nucleotide triphosphate hydrolases"/>
    <property type="match status" value="1"/>
</dbReference>
<dbReference type="HAMAP" id="MF_00185">
    <property type="entry name" value="IPP_trans"/>
    <property type="match status" value="1"/>
</dbReference>
<dbReference type="InterPro" id="IPR039657">
    <property type="entry name" value="Dimethylallyltransferase"/>
</dbReference>
<dbReference type="InterPro" id="IPR018022">
    <property type="entry name" value="IPT"/>
</dbReference>
<dbReference type="InterPro" id="IPR027417">
    <property type="entry name" value="P-loop_NTPase"/>
</dbReference>
<dbReference type="NCBIfam" id="TIGR00174">
    <property type="entry name" value="miaA"/>
    <property type="match status" value="1"/>
</dbReference>
<dbReference type="PANTHER" id="PTHR11088">
    <property type="entry name" value="TRNA DIMETHYLALLYLTRANSFERASE"/>
    <property type="match status" value="1"/>
</dbReference>
<dbReference type="PANTHER" id="PTHR11088:SF60">
    <property type="entry name" value="TRNA DIMETHYLALLYLTRANSFERASE"/>
    <property type="match status" value="1"/>
</dbReference>
<dbReference type="Pfam" id="PF01715">
    <property type="entry name" value="IPPT"/>
    <property type="match status" value="1"/>
</dbReference>
<dbReference type="SUPFAM" id="SSF52540">
    <property type="entry name" value="P-loop containing nucleoside triphosphate hydrolases"/>
    <property type="match status" value="1"/>
</dbReference>
<gene>
    <name evidence="1" type="primary">miaA</name>
    <name type="ordered locus">Clim_0959</name>
</gene>
<keyword id="KW-0067">ATP-binding</keyword>
<keyword id="KW-0460">Magnesium</keyword>
<keyword id="KW-0547">Nucleotide-binding</keyword>
<keyword id="KW-0808">Transferase</keyword>
<keyword id="KW-0819">tRNA processing</keyword>
<sequence>MTSGERQKPVLVILGPTASGKSALAMNIAGNLDAEIISADSRQIYRELTIGSAKPSEDDLRMVRHHFINEKTIGEPFTAGDFAEAAYARILDIHNRNKYAVVVGGSTLYLEGLLKGFGDLPPGDQEIRSRLTAELALAGGEKLFERLRKLDPIQAATLDPTKTRRLIRSLEIIEITGKTVTSLQEYRRIPALDYRIVGLSIARPILYGRIDTRVDEMIASGLVEEAEYLYKKHYSLLRTERNSALKTVGYQELFDFFEKKTDFDRAVTLIKQHTRNYAKRQLTFFKNRLNVTWMDAFGEHAAPDILRAACCRELAE</sequence>
<protein>
    <recommendedName>
        <fullName evidence="1">tRNA dimethylallyltransferase</fullName>
        <ecNumber evidence="1">2.5.1.75</ecNumber>
    </recommendedName>
    <alternativeName>
        <fullName evidence="1">Dimethylallyl diphosphate:tRNA dimethylallyltransferase</fullName>
        <shortName evidence="1">DMAPP:tRNA dimethylallyltransferase</shortName>
        <shortName evidence="1">DMATase</shortName>
    </alternativeName>
    <alternativeName>
        <fullName evidence="1">Isopentenyl-diphosphate:tRNA isopentenyltransferase</fullName>
        <shortName evidence="1">IPP transferase</shortName>
        <shortName evidence="1">IPPT</shortName>
        <shortName evidence="1">IPTase</shortName>
    </alternativeName>
</protein>
<evidence type="ECO:0000255" key="1">
    <source>
        <dbReference type="HAMAP-Rule" id="MF_00185"/>
    </source>
</evidence>
<feature type="chain" id="PRO_0000377116" description="tRNA dimethylallyltransferase">
    <location>
        <begin position="1"/>
        <end position="316"/>
    </location>
</feature>
<feature type="region of interest" description="Interaction with substrate tRNA" evidence="1">
    <location>
        <begin position="40"/>
        <end position="43"/>
    </location>
</feature>
<feature type="binding site" evidence="1">
    <location>
        <begin position="15"/>
        <end position="22"/>
    </location>
    <ligand>
        <name>ATP</name>
        <dbReference type="ChEBI" id="CHEBI:30616"/>
    </ligand>
</feature>
<feature type="binding site" evidence="1">
    <location>
        <begin position="17"/>
        <end position="22"/>
    </location>
    <ligand>
        <name>substrate</name>
    </ligand>
</feature>
<feature type="site" description="Interaction with substrate tRNA" evidence="1">
    <location>
        <position position="106"/>
    </location>
</feature>
<feature type="site" description="Interaction with substrate tRNA" evidence="1">
    <location>
        <position position="128"/>
    </location>
</feature>
<comment type="function">
    <text evidence="1">Catalyzes the transfer of a dimethylallyl group onto the adenine at position 37 in tRNAs that read codons beginning with uridine, leading to the formation of N6-(dimethylallyl)adenosine (i(6)A).</text>
</comment>
<comment type="catalytic activity">
    <reaction evidence="1">
        <text>adenosine(37) in tRNA + dimethylallyl diphosphate = N(6)-dimethylallyladenosine(37) in tRNA + diphosphate</text>
        <dbReference type="Rhea" id="RHEA:26482"/>
        <dbReference type="Rhea" id="RHEA-COMP:10162"/>
        <dbReference type="Rhea" id="RHEA-COMP:10375"/>
        <dbReference type="ChEBI" id="CHEBI:33019"/>
        <dbReference type="ChEBI" id="CHEBI:57623"/>
        <dbReference type="ChEBI" id="CHEBI:74411"/>
        <dbReference type="ChEBI" id="CHEBI:74415"/>
        <dbReference type="EC" id="2.5.1.75"/>
    </reaction>
</comment>
<comment type="cofactor">
    <cofactor evidence="1">
        <name>Mg(2+)</name>
        <dbReference type="ChEBI" id="CHEBI:18420"/>
    </cofactor>
</comment>
<comment type="subunit">
    <text evidence="1">Monomer.</text>
</comment>
<comment type="similarity">
    <text evidence="1">Belongs to the IPP transferase family.</text>
</comment>
<name>MIAA_CHLL2</name>
<organism>
    <name type="scientific">Chlorobium limicola (strain DSM 245 / NBRC 103803 / 6330)</name>
    <dbReference type="NCBI Taxonomy" id="290315"/>
    <lineage>
        <taxon>Bacteria</taxon>
        <taxon>Pseudomonadati</taxon>
        <taxon>Chlorobiota</taxon>
        <taxon>Chlorobiia</taxon>
        <taxon>Chlorobiales</taxon>
        <taxon>Chlorobiaceae</taxon>
        <taxon>Chlorobium/Pelodictyon group</taxon>
        <taxon>Chlorobium</taxon>
    </lineage>
</organism>
<accession>B3EIU4</accession>
<reference key="1">
    <citation type="submission" date="2008-05" db="EMBL/GenBank/DDBJ databases">
        <title>Complete sequence of Chlorobium limicola DSM 245.</title>
        <authorList>
            <consortium name="US DOE Joint Genome Institute"/>
            <person name="Lucas S."/>
            <person name="Copeland A."/>
            <person name="Lapidus A."/>
            <person name="Glavina del Rio T."/>
            <person name="Dalin E."/>
            <person name="Tice H."/>
            <person name="Bruce D."/>
            <person name="Goodwin L."/>
            <person name="Pitluck S."/>
            <person name="Schmutz J."/>
            <person name="Larimer F."/>
            <person name="Land M."/>
            <person name="Hauser L."/>
            <person name="Kyrpides N."/>
            <person name="Ovchinnikova G."/>
            <person name="Zhao F."/>
            <person name="Li T."/>
            <person name="Liu Z."/>
            <person name="Overmann J."/>
            <person name="Bryant D.A."/>
            <person name="Richardson P."/>
        </authorList>
    </citation>
    <scope>NUCLEOTIDE SEQUENCE [LARGE SCALE GENOMIC DNA]</scope>
    <source>
        <strain>DSM 245 / NBRC 103803 / 6330</strain>
    </source>
</reference>